<proteinExistence type="evidence at protein level"/>
<feature type="chain" id="PRO_0000063675" description="Keratin, type I cytoskeletal 20">
    <location>
        <begin position="1"/>
        <end position="424"/>
    </location>
</feature>
<feature type="domain" description="IF rod" evidence="2">
    <location>
        <begin position="70"/>
        <end position="381"/>
    </location>
</feature>
<feature type="region of interest" description="Head">
    <location>
        <begin position="1"/>
        <end position="69"/>
    </location>
</feature>
<feature type="region of interest" description="Coil 1A">
    <location>
        <begin position="70"/>
        <end position="105"/>
    </location>
</feature>
<feature type="region of interest" description="Linker 1">
    <location>
        <begin position="106"/>
        <end position="123"/>
    </location>
</feature>
<feature type="region of interest" description="Coil 1B">
    <location>
        <begin position="124"/>
        <end position="215"/>
    </location>
</feature>
<feature type="region of interest" description="Linker 12">
    <location>
        <begin position="216"/>
        <end position="238"/>
    </location>
</feature>
<feature type="region of interest" description="Coil 2">
    <location>
        <begin position="239"/>
        <end position="377"/>
    </location>
</feature>
<feature type="region of interest" description="Tail">
    <location>
        <begin position="378"/>
        <end position="424"/>
    </location>
</feature>
<feature type="site" description="Cleavage; by caspases" evidence="6">
    <location>
        <begin position="228"/>
        <end position="229"/>
    </location>
</feature>
<feature type="modified residue" description="Phosphoserine; by MAPKAPK2, MAPKAPK3 and PKC" evidence="6">
    <location>
        <position position="13"/>
    </location>
</feature>
<feature type="sequence variant" id="VAR_036367" description="In a colorectal cancer sample; somatic mutation." evidence="7">
    <original>S</original>
    <variation>R</variation>
    <location>
        <position position="4"/>
    </location>
</feature>
<feature type="sequence variant" id="VAR_024489" description="In dbSNP:rs7212483." evidence="5">
    <original>S</original>
    <variation>N</variation>
    <location>
        <position position="129"/>
    </location>
</feature>
<feature type="sequence variant" id="VAR_064726" description="Found in a renal cell carcinoma sample; somatic mutation." evidence="9">
    <original>G</original>
    <variation>C</variation>
    <location>
        <position position="214"/>
    </location>
</feature>
<feature type="mutagenesis site" description="Promotes keratin filament disassembly." evidence="6">
    <original>S</original>
    <variation>A</variation>
    <location>
        <position position="13"/>
    </location>
</feature>
<feature type="mutagenesis site" description="No effect on keratin filament organization." evidence="6">
    <original>S</original>
    <variation>A</variation>
    <location>
        <position position="14"/>
    </location>
</feature>
<feature type="mutagenesis site" description="Leads to collapsed filaments." evidence="4">
    <original>R</original>
    <variation>H</variation>
    <location>
        <position position="80"/>
    </location>
</feature>
<feature type="sequence conflict" description="In Ref. 5; CAA51914." evidence="11" ref="5">
    <original>T</original>
    <variation>S</variation>
    <location>
        <position position="161"/>
    </location>
</feature>
<feature type="sequence conflict" description="In Ref. 5; CAA51914." evidence="11" ref="5">
    <original>Q</original>
    <variation>P</variation>
    <location>
        <position position="349"/>
    </location>
</feature>
<feature type="sequence conflict" description="In Ref. 5; CAA51914." evidence="11" ref="5">
    <original>R</original>
    <variation>T</variation>
    <location>
        <position position="398"/>
    </location>
</feature>
<organism>
    <name type="scientific">Homo sapiens</name>
    <name type="common">Human</name>
    <dbReference type="NCBI Taxonomy" id="9606"/>
    <lineage>
        <taxon>Eukaryota</taxon>
        <taxon>Metazoa</taxon>
        <taxon>Chordata</taxon>
        <taxon>Craniata</taxon>
        <taxon>Vertebrata</taxon>
        <taxon>Euteleostomi</taxon>
        <taxon>Mammalia</taxon>
        <taxon>Eutheria</taxon>
        <taxon>Euarchontoglires</taxon>
        <taxon>Primates</taxon>
        <taxon>Haplorrhini</taxon>
        <taxon>Catarrhini</taxon>
        <taxon>Hominidae</taxon>
        <taxon>Homo</taxon>
    </lineage>
</organism>
<keyword id="KW-0053">Apoptosis</keyword>
<keyword id="KW-0175">Coiled coil</keyword>
<keyword id="KW-0963">Cytoplasm</keyword>
<keyword id="KW-0903">Direct protein sequencing</keyword>
<keyword id="KW-0403">Intermediate filament</keyword>
<keyword id="KW-0416">Keratin</keyword>
<keyword id="KW-0597">Phosphoprotein</keyword>
<keyword id="KW-1267">Proteomics identification</keyword>
<keyword id="KW-1185">Reference proteome</keyword>
<gene>
    <name type="primary">KRT20</name>
</gene>
<protein>
    <recommendedName>
        <fullName>Keratin, type I cytoskeletal 20</fullName>
    </recommendedName>
    <alternativeName>
        <fullName>Cytokeratin-20</fullName>
        <shortName>CK-20</shortName>
    </alternativeName>
    <alternativeName>
        <fullName>Keratin-20</fullName>
        <shortName>K20</shortName>
    </alternativeName>
    <alternativeName>
        <fullName>Protein IT</fullName>
    </alternativeName>
</protein>
<name>K1C20_HUMAN</name>
<comment type="function">
    <text evidence="1 4 6">Plays a significant role in maintaining keratin filament organization in intestinal epithelia. When phosphorylated, plays a role in the secretion of mucin in the small intestine (By similarity).</text>
</comment>
<comment type="subunit">
    <text>Heterotetramer of two type I and two type II keratins. Associates with KRT8.</text>
</comment>
<comment type="interaction">
    <interactant intactId="EBI-742094">
        <id>P35900</id>
    </interactant>
    <interactant intactId="EBI-743598">
        <id>Q9NYB9</id>
        <label>ABI2</label>
    </interactant>
    <organismsDiffer>false</organismsDiffer>
    <experiments>3</experiments>
</comment>
<comment type="interaction">
    <interactant intactId="EBI-742094">
        <id>P35900</id>
    </interactant>
    <interactant intactId="EBI-10187270">
        <id>Q9Y2J4-4</id>
        <label>AMOTL2</label>
    </interactant>
    <organismsDiffer>false</organismsDiffer>
    <experiments>3</experiments>
</comment>
<comment type="interaction">
    <interactant intactId="EBI-742094">
        <id>P35900</id>
    </interactant>
    <interactant intactId="EBI-752084">
        <id>Q9BUW7</id>
        <label>BBLN</label>
    </interactant>
    <organismsDiffer>false</organismsDiffer>
    <experiments>9</experiments>
</comment>
<comment type="interaction">
    <interactant intactId="EBI-742094">
        <id>P35900</id>
    </interactant>
    <interactant intactId="EBI-1050106">
        <id>O75934</id>
        <label>BCAS2</label>
    </interactant>
    <organismsDiffer>false</organismsDiffer>
    <experiments>3</experiments>
</comment>
<comment type="interaction">
    <interactant intactId="EBI-742094">
        <id>P35900</id>
    </interactant>
    <interactant intactId="EBI-10181422">
        <id>A0A1B0GWI1</id>
        <label>CCDC196</label>
    </interactant>
    <organismsDiffer>false</organismsDiffer>
    <experiments>3</experiments>
</comment>
<comment type="interaction">
    <interactant intactId="EBI-742094">
        <id>P35900</id>
    </interactant>
    <interactant intactId="EBI-3867333">
        <id>A8MQ03</id>
        <label>CYSRT1</label>
    </interactant>
    <organismsDiffer>false</organismsDiffer>
    <experiments>3</experiments>
</comment>
<comment type="interaction">
    <interactant intactId="EBI-742094">
        <id>P35900</id>
    </interactant>
    <interactant intactId="EBI-1055572">
        <id>P17661</id>
        <label>DES</label>
    </interactant>
    <organismsDiffer>false</organismsDiffer>
    <experiments>3</experiments>
</comment>
<comment type="interaction">
    <interactant intactId="EBI-742094">
        <id>P35900</id>
    </interactant>
    <interactant intactId="EBI-466029">
        <id>P42858</id>
        <label>HTT</label>
    </interactant>
    <organismsDiffer>false</organismsDiffer>
    <experiments>9</experiments>
</comment>
<comment type="interaction">
    <interactant intactId="EBI-742094">
        <id>P35900</id>
    </interactant>
    <interactant intactId="EBI-10171552">
        <id>A1A4E9</id>
        <label>KRT13</label>
    </interactant>
    <organismsDiffer>false</organismsDiffer>
    <experiments>3</experiments>
</comment>
<comment type="interaction">
    <interactant intactId="EBI-742094">
        <id>P35900</id>
    </interactant>
    <interactant intactId="EBI-739566">
        <id>P19012</id>
        <label>KRT15</label>
    </interactant>
    <organismsDiffer>false</organismsDiffer>
    <experiments>5</experiments>
</comment>
<comment type="interaction">
    <interactant intactId="EBI-742094">
        <id>P35900</id>
    </interactant>
    <interactant intactId="EBI-2952736">
        <id>Q2M2I5</id>
        <label>KRT24</label>
    </interactant>
    <organismsDiffer>false</organismsDiffer>
    <experiments>3</experiments>
</comment>
<comment type="interaction">
    <interactant intactId="EBI-742094">
        <id>P35900</id>
    </interactant>
    <interactant intactId="EBI-3044087">
        <id>Q7Z3Y8</id>
        <label>KRT27</label>
    </interactant>
    <organismsDiffer>false</organismsDiffer>
    <experiments>3</experiments>
</comment>
<comment type="interaction">
    <interactant intactId="EBI-742094">
        <id>P35900</id>
    </interactant>
    <interactant intactId="EBI-2430095">
        <id>P12035</id>
        <label>KRT3</label>
    </interactant>
    <organismsDiffer>false</organismsDiffer>
    <experiments>3</experiments>
</comment>
<comment type="interaction">
    <interactant intactId="EBI-742094">
        <id>P35900</id>
    </interactant>
    <interactant intactId="EBI-948001">
        <id>Q15323</id>
        <label>KRT31</label>
    </interactant>
    <organismsDiffer>false</organismsDiffer>
    <experiments>3</experiments>
</comment>
<comment type="interaction">
    <interactant intactId="EBI-742094">
        <id>P35900</id>
    </interactant>
    <interactant intactId="EBI-1047093">
        <id>O76011</id>
        <label>KRT34</label>
    </interactant>
    <organismsDiffer>false</organismsDiffer>
    <experiments>3</experiments>
</comment>
<comment type="interaction">
    <interactant intactId="EBI-742094">
        <id>P35900</id>
    </interactant>
    <interactant intactId="EBI-10171697">
        <id>Q6A162</id>
        <label>KRT40</label>
    </interactant>
    <organismsDiffer>false</organismsDiffer>
    <experiments>3</experiments>
</comment>
<comment type="interaction">
    <interactant intactId="EBI-742094">
        <id>P35900</id>
    </interactant>
    <interactant intactId="EBI-1221280">
        <id>Q14CN4</id>
        <label>KRT72</label>
    </interactant>
    <organismsDiffer>false</organismsDiffer>
    <experiments>3</experiments>
</comment>
<comment type="interaction">
    <interactant intactId="EBI-742094">
        <id>P35900</id>
    </interactant>
    <interactant intactId="EBI-2949715">
        <id>O95678</id>
        <label>KRT75</label>
    </interactant>
    <organismsDiffer>false</organismsDiffer>
    <experiments>3</experiments>
</comment>
<comment type="interaction">
    <interactant intactId="EBI-742094">
        <id>P35900</id>
    </interactant>
    <interactant intactId="EBI-2952745">
        <id>Q01546</id>
        <label>KRT76</label>
    </interactant>
    <organismsDiffer>false</organismsDiffer>
    <experiments>3</experiments>
</comment>
<comment type="interaction">
    <interactant intactId="EBI-742094">
        <id>P35900</id>
    </interactant>
    <interactant intactId="EBI-3046635">
        <id>Q6KB66</id>
        <label>KRT80</label>
    </interactant>
    <organismsDiffer>false</organismsDiffer>
    <experiments>3</experiments>
</comment>
<comment type="interaction">
    <interactant intactId="EBI-742094">
        <id>P35900</id>
    </interactant>
    <interactant intactId="EBI-11999246">
        <id>Q6KB66-2</id>
        <label>KRT80</label>
    </interactant>
    <organismsDiffer>false</organismsDiffer>
    <experiments>3</experiments>
</comment>
<comment type="interaction">
    <interactant intactId="EBI-742094">
        <id>P35900</id>
    </interactant>
    <interactant intactId="EBI-11959885">
        <id>Q07627</id>
        <label>KRTAP1-1</label>
    </interactant>
    <organismsDiffer>false</organismsDiffer>
    <experiments>3</experiments>
</comment>
<comment type="interaction">
    <interactant intactId="EBI-742094">
        <id>P35900</id>
    </interactant>
    <interactant intactId="EBI-10172290">
        <id>P60409</id>
        <label>KRTAP10-7</label>
    </interactant>
    <organismsDiffer>false</organismsDiffer>
    <experiments>3</experiments>
</comment>
<comment type="interaction">
    <interactant intactId="EBI-742094">
        <id>P35900</id>
    </interactant>
    <interactant intactId="EBI-10171774">
        <id>P60410</id>
        <label>KRTAP10-8</label>
    </interactant>
    <organismsDiffer>false</organismsDiffer>
    <experiments>6</experiments>
</comment>
<comment type="interaction">
    <interactant intactId="EBI-742094">
        <id>P35900</id>
    </interactant>
    <interactant intactId="EBI-10172052">
        <id>P60411</id>
        <label>KRTAP10-9</label>
    </interactant>
    <organismsDiffer>false</organismsDiffer>
    <experiments>3</experiments>
</comment>
<comment type="interaction">
    <interactant intactId="EBI-742094">
        <id>P35900</id>
    </interactant>
    <interactant intactId="EBI-11953334">
        <id>P60328</id>
        <label>KRTAP12-3</label>
    </interactant>
    <organismsDiffer>false</organismsDiffer>
    <experiments>3</experiments>
</comment>
<comment type="interaction">
    <interactant intactId="EBI-742094">
        <id>P35900</id>
    </interactant>
    <interactant intactId="EBI-22311199">
        <id>Q3LI67</id>
        <label>KRTAP6-3</label>
    </interactant>
    <organismsDiffer>false</organismsDiffer>
    <experiments>3</experiments>
</comment>
<comment type="interaction">
    <interactant intactId="EBI-742094">
        <id>P35900</id>
    </interactant>
    <interactant intactId="EBI-945833">
        <id>Q7Z3S9</id>
        <label>NOTCH2NLA</label>
    </interactant>
    <organismsDiffer>false</organismsDiffer>
    <experiments>3</experiments>
</comment>
<comment type="interaction">
    <interactant intactId="EBI-742094">
        <id>P35900</id>
    </interactant>
    <interactant intactId="EBI-347978">
        <id>P37198</id>
        <label>NUP62</label>
    </interactant>
    <organismsDiffer>false</organismsDiffer>
    <experiments>7</experiments>
</comment>
<comment type="interaction">
    <interactant intactId="EBI-742094">
        <id>P35900</id>
    </interactant>
    <interactant intactId="EBI-346930">
        <id>O00459</id>
        <label>PIK3R2</label>
    </interactant>
    <organismsDiffer>false</organismsDiffer>
    <experiments>3</experiments>
</comment>
<comment type="interaction">
    <interactant intactId="EBI-742094">
        <id>P35900</id>
    </interactant>
    <interactant intactId="EBI-1105153">
        <id>Q96KQ4</id>
        <label>PPP1R13B</label>
    </interactant>
    <organismsDiffer>false</organismsDiffer>
    <experiments>3</experiments>
</comment>
<comment type="interaction">
    <interactant intactId="EBI-742094">
        <id>P35900</id>
    </interactant>
    <interactant intactId="EBI-752074">
        <id>P41219</id>
        <label>PRPH</label>
    </interactant>
    <organismsDiffer>false</organismsDiffer>
    <experiments>6</experiments>
</comment>
<comment type="interaction">
    <interactant intactId="EBI-742094">
        <id>P35900</id>
    </interactant>
    <interactant intactId="EBI-296723">
        <id>O95295</id>
        <label>SNAPIN</label>
    </interactant>
    <organismsDiffer>false</organismsDiffer>
    <experiments>3</experiments>
</comment>
<comment type="interaction">
    <interactant intactId="EBI-742094">
        <id>P35900</id>
    </interactant>
    <interactant intactId="EBI-1105213">
        <id>Q9UBB9</id>
        <label>TFIP11</label>
    </interactant>
    <organismsDiffer>false</organismsDiffer>
    <experiments>7</experiments>
</comment>
<comment type="interaction">
    <interactant intactId="EBI-742094">
        <id>P35900</id>
    </interactant>
    <interactant intactId="EBI-359793">
        <id>P40222</id>
        <label>TXLNA</label>
    </interactant>
    <organismsDiffer>false</organismsDiffer>
    <experiments>6</experiments>
</comment>
<comment type="interaction">
    <interactant intactId="EBI-742094">
        <id>P35900</id>
    </interactant>
    <interactant intactId="EBI-739895">
        <id>Q8N6Y0</id>
        <label>USHBP1</label>
    </interactant>
    <organismsDiffer>false</organismsDiffer>
    <experiments>3</experiments>
</comment>
<comment type="interaction">
    <interactant intactId="EBI-742094">
        <id>P35900</id>
    </interactant>
    <interactant intactId="EBI-353844">
        <id>P08670</id>
        <label>VIM</label>
    </interactant>
    <organismsDiffer>false</organismsDiffer>
    <experiments>8</experiments>
</comment>
<comment type="subcellular location">
    <subcellularLocation>
        <location evidence="3 8">Cytoplasm</location>
    </subcellularLocation>
</comment>
<comment type="tissue specificity">
    <text evidence="3 8">Expressed predominantly in the intestinal epithelium. Expressed in luminal cells of colonic mucosa. Also expressed in the Merkel cells of keratinized oral mucosa; specifically at the tips of some rete ridges of the gingival mucosa, in the basal layer of the palatal mucosa and in the taste buds of lingual mucosa.</text>
</comment>
<comment type="developmental stage">
    <text evidence="10">First detected at embryonic week 8 in individual 'converted' simple epithelial cells of the developing intestinal mucosa. In later fetal stages, synthesis extends over most goblet cells and a variable number of villus enterocytes. In the developing gastric and intestinal mucosa, expressed in all enterocytes and goblet cells as well as certain 'low-differentiated' columnar cells, whereas the neuroendocrine and Paneth cells are negative.</text>
</comment>
<comment type="PTM">
    <text evidence="1">Hyperphosphorylation at Ser-13 occurs during the early stages of apoptosis but becomes less prominent during the later stages. Phosphorylation at Ser-13 also increases in response to stress brought on by cell injury (By similarity).</text>
</comment>
<comment type="PTM">
    <text evidence="6">Proteolytically cleaved by caspases during apoptosis. Cleavage occurs at Asp-228.</text>
</comment>
<comment type="miscellaneous">
    <text>There are two types of cytoskeletal and microfibrillar keratin: I (acidic; 40-55 kDa) and II (neutral to basic; 56-70 kDa).</text>
</comment>
<comment type="similarity">
    <text evidence="2">Belongs to the intermediate filament family.</text>
</comment>
<accession>P35900</accession>
<accession>B2R6W7</accession>
<evidence type="ECO:0000250" key="1"/>
<evidence type="ECO:0000255" key="2">
    <source>
        <dbReference type="PROSITE-ProRule" id="PRU01188"/>
    </source>
</evidence>
<evidence type="ECO:0000269" key="3">
    <source>
    </source>
</evidence>
<evidence type="ECO:0000269" key="4">
    <source>
    </source>
</evidence>
<evidence type="ECO:0000269" key="5">
    <source>
    </source>
</evidence>
<evidence type="ECO:0000269" key="6">
    <source>
    </source>
</evidence>
<evidence type="ECO:0000269" key="7">
    <source>
    </source>
</evidence>
<evidence type="ECO:0000269" key="8">
    <source>
    </source>
</evidence>
<evidence type="ECO:0000269" key="9">
    <source>
    </source>
</evidence>
<evidence type="ECO:0000269" key="10">
    <source>
    </source>
</evidence>
<evidence type="ECO:0000305" key="11"/>
<dbReference type="EMBL" id="X73501">
    <property type="protein sequence ID" value="CAA51913.1"/>
    <property type="molecule type" value="Genomic_DNA"/>
</dbReference>
<dbReference type="EMBL" id="AK312744">
    <property type="protein sequence ID" value="BAG35614.1"/>
    <property type="molecule type" value="mRNA"/>
</dbReference>
<dbReference type="EMBL" id="BC031559">
    <property type="protein sequence ID" value="AAH31559.1"/>
    <property type="molecule type" value="mRNA"/>
</dbReference>
<dbReference type="EMBL" id="X73502">
    <property type="protein sequence ID" value="CAA51914.1"/>
    <property type="molecule type" value="mRNA"/>
</dbReference>
<dbReference type="CCDS" id="CCDS11379.1"/>
<dbReference type="PIR" id="S37780">
    <property type="entry name" value="S37780"/>
</dbReference>
<dbReference type="RefSeq" id="NP_061883.1">
    <property type="nucleotide sequence ID" value="NM_019010.3"/>
</dbReference>
<dbReference type="SMR" id="P35900"/>
<dbReference type="BioGRID" id="119979">
    <property type="interactions" value="63"/>
</dbReference>
<dbReference type="FunCoup" id="P35900">
    <property type="interactions" value="164"/>
</dbReference>
<dbReference type="IntAct" id="P35900">
    <property type="interactions" value="48"/>
</dbReference>
<dbReference type="MINT" id="P35900"/>
<dbReference type="STRING" id="9606.ENSP00000167588"/>
<dbReference type="iPTMnet" id="P35900"/>
<dbReference type="PhosphoSitePlus" id="P35900"/>
<dbReference type="SwissPalm" id="P35900"/>
<dbReference type="BioMuta" id="KRT20"/>
<dbReference type="DMDM" id="547750"/>
<dbReference type="jPOST" id="P35900"/>
<dbReference type="MassIVE" id="P35900"/>
<dbReference type="PaxDb" id="9606-ENSP00000167588"/>
<dbReference type="PeptideAtlas" id="P35900"/>
<dbReference type="PRIDE" id="P35900"/>
<dbReference type="ProteomicsDB" id="55160"/>
<dbReference type="Antibodypedia" id="3502">
    <property type="antibodies" value="1520 antibodies from 52 providers"/>
</dbReference>
<dbReference type="DNASU" id="54474"/>
<dbReference type="Ensembl" id="ENST00000167588.4">
    <property type="protein sequence ID" value="ENSP00000167588.3"/>
    <property type="gene ID" value="ENSG00000171431.4"/>
</dbReference>
<dbReference type="Ensembl" id="ENST00000576098.2">
    <property type="protein sequence ID" value="ENSP00000460501.2"/>
    <property type="gene ID" value="ENSG00000263057.2"/>
</dbReference>
<dbReference type="GeneID" id="54474"/>
<dbReference type="KEGG" id="hsa:54474"/>
<dbReference type="MANE-Select" id="ENST00000167588.4">
    <property type="protein sequence ID" value="ENSP00000167588.3"/>
    <property type="RefSeq nucleotide sequence ID" value="NM_019010.3"/>
    <property type="RefSeq protein sequence ID" value="NP_061883.1"/>
</dbReference>
<dbReference type="UCSC" id="uc002hvl.4">
    <property type="organism name" value="human"/>
</dbReference>
<dbReference type="AGR" id="HGNC:20412"/>
<dbReference type="CTD" id="54474"/>
<dbReference type="DisGeNET" id="54474"/>
<dbReference type="GeneCards" id="KRT20"/>
<dbReference type="HGNC" id="HGNC:20412">
    <property type="gene designation" value="KRT20"/>
</dbReference>
<dbReference type="HPA" id="ENSG00000171431">
    <property type="expression patterns" value="Tissue enriched (intestine)"/>
</dbReference>
<dbReference type="MalaCards" id="KRT20"/>
<dbReference type="MIM" id="608218">
    <property type="type" value="gene"/>
</dbReference>
<dbReference type="neXtProt" id="NX_P35900"/>
<dbReference type="OpenTargets" id="ENSG00000171431"/>
<dbReference type="PharmGKB" id="PA134938907"/>
<dbReference type="VEuPathDB" id="HostDB:ENSG00000171431"/>
<dbReference type="eggNOG" id="ENOG502QUY3">
    <property type="taxonomic scope" value="Eukaryota"/>
</dbReference>
<dbReference type="GeneTree" id="ENSGT00940000161855"/>
<dbReference type="HOGENOM" id="CLU_012560_8_1_1"/>
<dbReference type="InParanoid" id="P35900"/>
<dbReference type="OMA" id="LGTIMNE"/>
<dbReference type="OrthoDB" id="2441647at2759"/>
<dbReference type="PAN-GO" id="P35900">
    <property type="GO annotations" value="3 GO annotations based on evolutionary models"/>
</dbReference>
<dbReference type="PhylomeDB" id="P35900"/>
<dbReference type="TreeFam" id="TF332742"/>
<dbReference type="PathwayCommons" id="P35900"/>
<dbReference type="Reactome" id="R-HSA-6805567">
    <property type="pathway name" value="Keratinization"/>
</dbReference>
<dbReference type="Reactome" id="R-HSA-6809371">
    <property type="pathway name" value="Formation of the cornified envelope"/>
</dbReference>
<dbReference type="SignaLink" id="P35900"/>
<dbReference type="SIGNOR" id="P35900"/>
<dbReference type="BioGRID-ORCS" id="54474">
    <property type="hits" value="16 hits in 1144 CRISPR screens"/>
</dbReference>
<dbReference type="ChiTaRS" id="KRT20">
    <property type="organism name" value="human"/>
</dbReference>
<dbReference type="GeneWiki" id="Keratin_20"/>
<dbReference type="GenomeRNAi" id="54474"/>
<dbReference type="Pharos" id="P35900">
    <property type="development level" value="Tbio"/>
</dbReference>
<dbReference type="PRO" id="PR:P35900"/>
<dbReference type="Proteomes" id="UP000005640">
    <property type="component" value="Chromosome 17"/>
</dbReference>
<dbReference type="RNAct" id="P35900">
    <property type="molecule type" value="protein"/>
</dbReference>
<dbReference type="Bgee" id="ENSG00000171431">
    <property type="expression patterns" value="Expressed in mucosa of transverse colon and 76 other cell types or tissues"/>
</dbReference>
<dbReference type="GO" id="GO:0005737">
    <property type="term" value="C:cytoplasm"/>
    <property type="evidence" value="ECO:0000314"/>
    <property type="project" value="UniProtKB"/>
</dbReference>
<dbReference type="GO" id="GO:0005856">
    <property type="term" value="C:cytoskeleton"/>
    <property type="evidence" value="ECO:0000318"/>
    <property type="project" value="GO_Central"/>
</dbReference>
<dbReference type="GO" id="GO:0005829">
    <property type="term" value="C:cytosol"/>
    <property type="evidence" value="ECO:0000314"/>
    <property type="project" value="HPA"/>
</dbReference>
<dbReference type="GO" id="GO:0005882">
    <property type="term" value="C:intermediate filament"/>
    <property type="evidence" value="ECO:0000303"/>
    <property type="project" value="UniProtKB"/>
</dbReference>
<dbReference type="GO" id="GO:0045111">
    <property type="term" value="C:intermediate filament cytoskeleton"/>
    <property type="evidence" value="ECO:0000314"/>
    <property type="project" value="HPA"/>
</dbReference>
<dbReference type="GO" id="GO:0005200">
    <property type="term" value="F:structural constituent of cytoskeleton"/>
    <property type="evidence" value="ECO:0000303"/>
    <property type="project" value="UniProtKB"/>
</dbReference>
<dbReference type="GO" id="GO:0006915">
    <property type="term" value="P:apoptotic process"/>
    <property type="evidence" value="ECO:0007669"/>
    <property type="project" value="UniProtKB-KW"/>
</dbReference>
<dbReference type="GO" id="GO:0009267">
    <property type="term" value="P:cellular response to starvation"/>
    <property type="evidence" value="ECO:0007669"/>
    <property type="project" value="Ensembl"/>
</dbReference>
<dbReference type="GO" id="GO:0030855">
    <property type="term" value="P:epithelial cell differentiation"/>
    <property type="evidence" value="ECO:0000318"/>
    <property type="project" value="GO_Central"/>
</dbReference>
<dbReference type="GO" id="GO:0045109">
    <property type="term" value="P:intermediate filament organization"/>
    <property type="evidence" value="ECO:0000315"/>
    <property type="project" value="UniProtKB"/>
</dbReference>
<dbReference type="GO" id="GO:0050708">
    <property type="term" value="P:regulation of protein secretion"/>
    <property type="evidence" value="ECO:0007669"/>
    <property type="project" value="Ensembl"/>
</dbReference>
<dbReference type="FunFam" id="1.20.5.1160:FF:000002">
    <property type="entry name" value="Type I keratin 10"/>
    <property type="match status" value="1"/>
</dbReference>
<dbReference type="FunFam" id="1.20.5.170:FF:000002">
    <property type="entry name" value="Type I keratin KA11"/>
    <property type="match status" value="1"/>
</dbReference>
<dbReference type="FunFam" id="1.20.5.500:FF:000001">
    <property type="entry name" value="Type II keratin 23"/>
    <property type="match status" value="1"/>
</dbReference>
<dbReference type="Gene3D" id="1.20.5.170">
    <property type="match status" value="1"/>
</dbReference>
<dbReference type="Gene3D" id="1.20.5.500">
    <property type="entry name" value="Single helix bin"/>
    <property type="match status" value="1"/>
</dbReference>
<dbReference type="Gene3D" id="1.20.5.1160">
    <property type="entry name" value="Vasodilator-stimulated phosphoprotein"/>
    <property type="match status" value="1"/>
</dbReference>
<dbReference type="InterPro" id="IPR018039">
    <property type="entry name" value="IF_conserved"/>
</dbReference>
<dbReference type="InterPro" id="IPR039008">
    <property type="entry name" value="IF_rod_dom"/>
</dbReference>
<dbReference type="InterPro" id="IPR002957">
    <property type="entry name" value="Keratin_I"/>
</dbReference>
<dbReference type="PANTHER" id="PTHR23239">
    <property type="entry name" value="INTERMEDIATE FILAMENT"/>
    <property type="match status" value="1"/>
</dbReference>
<dbReference type="PANTHER" id="PTHR23239:SF167">
    <property type="entry name" value="KERATIN, TYPE I CYTOSKELETAL 20"/>
    <property type="match status" value="1"/>
</dbReference>
<dbReference type="Pfam" id="PF00038">
    <property type="entry name" value="Filament"/>
    <property type="match status" value="1"/>
</dbReference>
<dbReference type="PRINTS" id="PR01248">
    <property type="entry name" value="TYPE1KERATIN"/>
</dbReference>
<dbReference type="SMART" id="SM01391">
    <property type="entry name" value="Filament"/>
    <property type="match status" value="1"/>
</dbReference>
<dbReference type="SUPFAM" id="SSF64593">
    <property type="entry name" value="Intermediate filament protein, coiled coil region"/>
    <property type="match status" value="2"/>
</dbReference>
<dbReference type="PROSITE" id="PS00226">
    <property type="entry name" value="IF_ROD_1"/>
    <property type="match status" value="1"/>
</dbReference>
<dbReference type="PROSITE" id="PS51842">
    <property type="entry name" value="IF_ROD_2"/>
    <property type="match status" value="1"/>
</dbReference>
<reference key="1">
    <citation type="journal article" date="1993" name="Differentiation">
        <title>The human gene encoding cytokeratin 20 and its expression during fetal development and in gastrointestinal carcinomas.</title>
        <authorList>
            <person name="Moll R."/>
            <person name="Zimbelmann R."/>
            <person name="Goldschmidt M.D."/>
            <person name="Keith M."/>
            <person name="Laufer J."/>
            <person name="Kasper M."/>
            <person name="Koch P.J."/>
            <person name="Franke W.W."/>
        </authorList>
    </citation>
    <scope>NUCLEOTIDE SEQUENCE [GENOMIC DNA]</scope>
    <scope>DEVELOPMENTAL STAGE</scope>
    <source>
        <tissue>Intestine</tissue>
    </source>
</reference>
<reference key="2">
    <citation type="journal article" date="2004" name="Nat. Genet.">
        <title>Complete sequencing and characterization of 21,243 full-length human cDNAs.</title>
        <authorList>
            <person name="Ota T."/>
            <person name="Suzuki Y."/>
            <person name="Nishikawa T."/>
            <person name="Otsuki T."/>
            <person name="Sugiyama T."/>
            <person name="Irie R."/>
            <person name="Wakamatsu A."/>
            <person name="Hayashi K."/>
            <person name="Sato H."/>
            <person name="Nagai K."/>
            <person name="Kimura K."/>
            <person name="Makita H."/>
            <person name="Sekine M."/>
            <person name="Obayashi M."/>
            <person name="Nishi T."/>
            <person name="Shibahara T."/>
            <person name="Tanaka T."/>
            <person name="Ishii S."/>
            <person name="Yamamoto J."/>
            <person name="Saito K."/>
            <person name="Kawai Y."/>
            <person name="Isono Y."/>
            <person name="Nakamura Y."/>
            <person name="Nagahari K."/>
            <person name="Murakami K."/>
            <person name="Yasuda T."/>
            <person name="Iwayanagi T."/>
            <person name="Wagatsuma M."/>
            <person name="Shiratori A."/>
            <person name="Sudo H."/>
            <person name="Hosoiri T."/>
            <person name="Kaku Y."/>
            <person name="Kodaira H."/>
            <person name="Kondo H."/>
            <person name="Sugawara M."/>
            <person name="Takahashi M."/>
            <person name="Kanda K."/>
            <person name="Yokoi T."/>
            <person name="Furuya T."/>
            <person name="Kikkawa E."/>
            <person name="Omura Y."/>
            <person name="Abe K."/>
            <person name="Kamihara K."/>
            <person name="Katsuta N."/>
            <person name="Sato K."/>
            <person name="Tanikawa M."/>
            <person name="Yamazaki M."/>
            <person name="Ninomiya K."/>
            <person name="Ishibashi T."/>
            <person name="Yamashita H."/>
            <person name="Murakawa K."/>
            <person name="Fujimori K."/>
            <person name="Tanai H."/>
            <person name="Kimata M."/>
            <person name="Watanabe M."/>
            <person name="Hiraoka S."/>
            <person name="Chiba Y."/>
            <person name="Ishida S."/>
            <person name="Ono Y."/>
            <person name="Takiguchi S."/>
            <person name="Watanabe S."/>
            <person name="Yosida M."/>
            <person name="Hotuta T."/>
            <person name="Kusano J."/>
            <person name="Kanehori K."/>
            <person name="Takahashi-Fujii A."/>
            <person name="Hara H."/>
            <person name="Tanase T.-O."/>
            <person name="Nomura Y."/>
            <person name="Togiya S."/>
            <person name="Komai F."/>
            <person name="Hara R."/>
            <person name="Takeuchi K."/>
            <person name="Arita M."/>
            <person name="Imose N."/>
            <person name="Musashino K."/>
            <person name="Yuuki H."/>
            <person name="Oshima A."/>
            <person name="Sasaki N."/>
            <person name="Aotsuka S."/>
            <person name="Yoshikawa Y."/>
            <person name="Matsunawa H."/>
            <person name="Ichihara T."/>
            <person name="Shiohata N."/>
            <person name="Sano S."/>
            <person name="Moriya S."/>
            <person name="Momiyama H."/>
            <person name="Satoh N."/>
            <person name="Takami S."/>
            <person name="Terashima Y."/>
            <person name="Suzuki O."/>
            <person name="Nakagawa S."/>
            <person name="Senoh A."/>
            <person name="Mizoguchi H."/>
            <person name="Goto Y."/>
            <person name="Shimizu F."/>
            <person name="Wakebe H."/>
            <person name="Hishigaki H."/>
            <person name="Watanabe T."/>
            <person name="Sugiyama A."/>
            <person name="Takemoto M."/>
            <person name="Kawakami B."/>
            <person name="Yamazaki M."/>
            <person name="Watanabe K."/>
            <person name="Kumagai A."/>
            <person name="Itakura S."/>
            <person name="Fukuzumi Y."/>
            <person name="Fujimori Y."/>
            <person name="Komiyama M."/>
            <person name="Tashiro H."/>
            <person name="Tanigami A."/>
            <person name="Fujiwara T."/>
            <person name="Ono T."/>
            <person name="Yamada K."/>
            <person name="Fujii Y."/>
            <person name="Ozaki K."/>
            <person name="Hirao M."/>
            <person name="Ohmori Y."/>
            <person name="Kawabata A."/>
            <person name="Hikiji T."/>
            <person name="Kobatake N."/>
            <person name="Inagaki H."/>
            <person name="Ikema Y."/>
            <person name="Okamoto S."/>
            <person name="Okitani R."/>
            <person name="Kawakami T."/>
            <person name="Noguchi S."/>
            <person name="Itoh T."/>
            <person name="Shigeta K."/>
            <person name="Senba T."/>
            <person name="Matsumura K."/>
            <person name="Nakajima Y."/>
            <person name="Mizuno T."/>
            <person name="Morinaga M."/>
            <person name="Sasaki M."/>
            <person name="Togashi T."/>
            <person name="Oyama M."/>
            <person name="Hata H."/>
            <person name="Watanabe M."/>
            <person name="Komatsu T."/>
            <person name="Mizushima-Sugano J."/>
            <person name="Satoh T."/>
            <person name="Shirai Y."/>
            <person name="Takahashi Y."/>
            <person name="Nakagawa K."/>
            <person name="Okumura K."/>
            <person name="Nagase T."/>
            <person name="Nomura N."/>
            <person name="Kikuchi H."/>
            <person name="Masuho Y."/>
            <person name="Yamashita R."/>
            <person name="Nakai K."/>
            <person name="Yada T."/>
            <person name="Nakamura Y."/>
            <person name="Ohara O."/>
            <person name="Isogai T."/>
            <person name="Sugano S."/>
        </authorList>
    </citation>
    <scope>NUCLEOTIDE SEQUENCE [LARGE SCALE MRNA]</scope>
    <scope>VARIANT ASN-129</scope>
    <source>
        <tissue>Small intestine</tissue>
    </source>
</reference>
<reference key="3">
    <citation type="journal article" date="2004" name="Genome Res.">
        <title>The status, quality, and expansion of the NIH full-length cDNA project: the Mammalian Gene Collection (MGC).</title>
        <authorList>
            <consortium name="The MGC Project Team"/>
        </authorList>
    </citation>
    <scope>NUCLEOTIDE SEQUENCE [LARGE SCALE MRNA]</scope>
</reference>
<reference key="4">
    <citation type="journal article" date="2006" name="J. Biol. Chem.">
        <title>Keratin 20 serine 13 phosphorylation is a stress and intestinal goblet cell marker.</title>
        <authorList>
            <person name="Zhou Q."/>
            <person name="Cadrin M."/>
            <person name="Herrmann H."/>
            <person name="Chen C.-H."/>
            <person name="Chalkley R.J."/>
            <person name="Burlingame A.L."/>
            <person name="Omary M.B."/>
        </authorList>
    </citation>
    <scope>PROTEIN SEQUENCE OF 11-28</scope>
    <scope>FUNCTION</scope>
    <scope>INTERACTION WITH KRT8</scope>
    <scope>PHOSPHORYLATION AT SER-13</scope>
    <scope>PROTEOLYTIC CLEAVAGE AT ASP-228</scope>
    <scope>MUTAGENESIS OF SER-13 AND SER-14</scope>
</reference>
<reference key="5">
    <citation type="journal article" date="1993" name="Differentiation">
        <title>Differential localization by in situ hybridization of distinct keratin mRNA species during intestinal epithelial cell development and differentiation.</title>
        <authorList>
            <person name="Calnek D."/>
            <person name="Quaroni A."/>
        </authorList>
    </citation>
    <scope>NUCLEOTIDE SEQUENCE [MRNA] OF 86-424</scope>
    <source>
        <tissue>Intestine</tissue>
    </source>
</reference>
<reference key="6">
    <citation type="journal article" date="1990" name="J. Cell Biol.">
        <title>Identification of protein IT of the intestinal cytoskeleton as a novel type I cytokeratin with unusual properties and expression patterns.</title>
        <authorList>
            <person name="Moll R."/>
            <person name="Schiller D.L."/>
            <person name="Franke W.W."/>
        </authorList>
    </citation>
    <scope>IDENTIFICATION</scope>
    <scope>SUBCELLULAR LOCATION</scope>
    <scope>TISSUE SPECIFICITY</scope>
</reference>
<reference key="7">
    <citation type="journal article" date="2000" name="Arch. Oral Biol.">
        <title>An immunohistological study of cytokeratin 20 in human and mammalian oral epithelium.</title>
        <authorList>
            <person name="Barrett A.W."/>
            <person name="Cort E.M."/>
            <person name="Patel P."/>
            <person name="Berkovitz B.K.B."/>
        </authorList>
    </citation>
    <scope>INTERACTION WITH KRT8</scope>
    <scope>SUBCELLULAR LOCATION</scope>
    <scope>TISSUE SPECIFICITY</scope>
</reference>
<reference key="8">
    <citation type="journal article" date="2003" name="Mol. Biol. Cell">
        <title>Keratin 20 helps maintain intermediate filament organization in intestinal epithelia.</title>
        <authorList>
            <person name="Zhou Q."/>
            <person name="Toivola D.M."/>
            <person name="Feng N."/>
            <person name="Greenberg H.B."/>
            <person name="Franke W.W."/>
            <person name="Omary M.B."/>
        </authorList>
    </citation>
    <scope>FUNCTION</scope>
    <scope>MUTAGENESIS OF ARG-80</scope>
</reference>
<reference key="9">
    <citation type="journal article" date="2006" name="Science">
        <title>The consensus coding sequences of human breast and colorectal cancers.</title>
        <authorList>
            <person name="Sjoeblom T."/>
            <person name="Jones S."/>
            <person name="Wood L.D."/>
            <person name="Parsons D.W."/>
            <person name="Lin J."/>
            <person name="Barber T.D."/>
            <person name="Mandelker D."/>
            <person name="Leary R.J."/>
            <person name="Ptak J."/>
            <person name="Silliman N."/>
            <person name="Szabo S."/>
            <person name="Buckhaults P."/>
            <person name="Farrell C."/>
            <person name="Meeh P."/>
            <person name="Markowitz S.D."/>
            <person name="Willis J."/>
            <person name="Dawson D."/>
            <person name="Willson J.K.V."/>
            <person name="Gazdar A.F."/>
            <person name="Hartigan J."/>
            <person name="Wu L."/>
            <person name="Liu C."/>
            <person name="Parmigiani G."/>
            <person name="Park B.H."/>
            <person name="Bachman K.E."/>
            <person name="Papadopoulos N."/>
            <person name="Vogelstein B."/>
            <person name="Kinzler K.W."/>
            <person name="Velculescu V.E."/>
        </authorList>
    </citation>
    <scope>VARIANT [LARGE SCALE ANALYSIS] ARG-4</scope>
</reference>
<reference key="10">
    <citation type="journal article" date="2011" name="Nature">
        <title>Exome sequencing identifies frequent mutation of the SWI/SNF complex gene PBRM1 in renal carcinoma.</title>
        <authorList>
            <person name="Varela I."/>
            <person name="Tarpey P."/>
            <person name="Raine K."/>
            <person name="Huang D."/>
            <person name="Ong C.K."/>
            <person name="Stephens P."/>
            <person name="Davies H."/>
            <person name="Jones D."/>
            <person name="Lin M.L."/>
            <person name="Teague J."/>
            <person name="Bignell G."/>
            <person name="Butler A."/>
            <person name="Cho J."/>
            <person name="Dalgliesh G.L."/>
            <person name="Galappaththige D."/>
            <person name="Greenman C."/>
            <person name="Hardy C."/>
            <person name="Jia M."/>
            <person name="Latimer C."/>
            <person name="Lau K.W."/>
            <person name="Marshall J."/>
            <person name="McLaren S."/>
            <person name="Menzies A."/>
            <person name="Mudie L."/>
            <person name="Stebbings L."/>
            <person name="Largaespada D.A."/>
            <person name="Wessels L.F.A."/>
            <person name="Richard S."/>
            <person name="Kahnoski R.J."/>
            <person name="Anema J."/>
            <person name="Tuveson D.A."/>
            <person name="Perez-Mancera P.A."/>
            <person name="Mustonen V."/>
            <person name="Fischer A."/>
            <person name="Adams D.J."/>
            <person name="Rust A."/>
            <person name="Chan-On W."/>
            <person name="Subimerb C."/>
            <person name="Dykema K."/>
            <person name="Furge K."/>
            <person name="Campbell P.J."/>
            <person name="Teh B.T."/>
            <person name="Stratton M.R."/>
            <person name="Futreal P.A."/>
        </authorList>
    </citation>
    <scope>VARIANT CYS-214</scope>
</reference>
<sequence length="424" mass="48487">MDFSRRSFHRSLSSSLQAPVVSTVGMQRLGTTPSVYGGAGGRGIRISNSRHTVNYGSDLTGGGDLFVGNEKMAMQNLNDRLASYLEKVRTLEQSNSKLEVQIKQWYETNAPRAGRDYSAYYRQIEELRSQIKDAQLQNARCVLQIDNAKLAAEDFRLKYETERGIRLTVEADLQGLNKVFDDLTLHKTDLEIQIEELNKDLALLKKEHQEEVDGLHKHLGNTVNVEVDAAPGLNLGVIMNEMRQKYEVMAQKNLQEAKEQFERQTAVLQQQVTVNTEELKGTEVQLTELRRTSQSLEIELQSHLSMKESLEHTLEETKARYSSQLANLQSLLSSLEAQLMQIRSNMERQNNEYHILLDIKTRLEQEIATYRRLLEGEDVKTTEYQLSTLEERDIKKTRKIKTVVQEVVDGKVVSSEVKEVEENI</sequence>